<comment type="function">
    <text evidence="1 5">Phosphoribosylformylglycinamidine synthase involved in the purines biosynthetic pathway. Catalyzes the ATP-dependent conversion of formylglycinamide ribonucleotide (FGAR) and glutamine to yield formylglycinamidine ribonucleotide (FGAM) and glutamate.</text>
</comment>
<comment type="catalytic activity">
    <reaction evidence="1">
        <text>N(2)-formyl-N(1)-(5-phospho-beta-D-ribosyl)glycinamide + L-glutamine + ATP + H2O = 2-formamido-N(1)-(5-O-phospho-beta-D-ribosyl)acetamidine + L-glutamate + ADP + phosphate + H(+)</text>
        <dbReference type="Rhea" id="RHEA:17129"/>
        <dbReference type="ChEBI" id="CHEBI:15377"/>
        <dbReference type="ChEBI" id="CHEBI:15378"/>
        <dbReference type="ChEBI" id="CHEBI:29985"/>
        <dbReference type="ChEBI" id="CHEBI:30616"/>
        <dbReference type="ChEBI" id="CHEBI:43474"/>
        <dbReference type="ChEBI" id="CHEBI:58359"/>
        <dbReference type="ChEBI" id="CHEBI:147286"/>
        <dbReference type="ChEBI" id="CHEBI:147287"/>
        <dbReference type="ChEBI" id="CHEBI:456216"/>
        <dbReference type="EC" id="6.3.5.3"/>
    </reaction>
</comment>
<comment type="pathway">
    <text evidence="1">Purine metabolism; IMP biosynthesis via de novo pathway; 5-amino-1-(5-phospho-D-ribosyl)imidazole from N(2)-formyl-N(1)-(5-phospho-D-ribosyl)glycinamide: step 1/2.</text>
</comment>
<comment type="subunit">
    <text evidence="1">Monomer.</text>
</comment>
<comment type="subcellular location">
    <subcellularLocation>
        <location evidence="1">Cytoplasm</location>
    </subcellularLocation>
</comment>
<comment type="similarity">
    <text evidence="1">In the N-terminal section; belongs to the FGAMS family.</text>
</comment>
<accession>P74881</accession>
<protein>
    <recommendedName>
        <fullName evidence="1">Phosphoribosylformylglycinamidine synthase</fullName>
        <shortName evidence="1">FGAM synthase</shortName>
        <shortName evidence="1">FGAMS</shortName>
        <ecNumber evidence="1">6.3.5.3</ecNumber>
    </recommendedName>
    <alternativeName>
        <fullName evidence="1">Formylglycinamide ribonucleotide amidotransferase</fullName>
        <shortName evidence="1">FGAR amidotransferase</shortName>
        <shortName evidence="1">FGAR-AT</shortName>
    </alternativeName>
</protein>
<dbReference type="EC" id="6.3.5.3" evidence="1"/>
<dbReference type="EMBL" id="U68728">
    <property type="protein sequence ID" value="AAB08888.1"/>
    <property type="molecule type" value="Genomic_DNA"/>
</dbReference>
<dbReference type="EMBL" id="AE006468">
    <property type="protein sequence ID" value="AAL21459.1"/>
    <property type="molecule type" value="Genomic_DNA"/>
</dbReference>
<dbReference type="RefSeq" id="WP_000970045.1">
    <property type="nucleotide sequence ID" value="NC_003197.2"/>
</dbReference>
<dbReference type="PDB" id="1T3T">
    <property type="method" value="X-ray"/>
    <property type="resolution" value="1.90 A"/>
    <property type="chains" value="A=1-1295"/>
</dbReference>
<dbReference type="PDB" id="3UGJ">
    <property type="method" value="X-ray"/>
    <property type="resolution" value="1.78 A"/>
    <property type="chains" value="A=1-1295"/>
</dbReference>
<dbReference type="PDB" id="3UJN">
    <property type="method" value="X-ray"/>
    <property type="resolution" value="2.98 A"/>
    <property type="chains" value="A=1-1295"/>
</dbReference>
<dbReference type="PDB" id="3UMM">
    <property type="method" value="X-ray"/>
    <property type="resolution" value="3.20 A"/>
    <property type="chains" value="A=1-1295"/>
</dbReference>
<dbReference type="PDB" id="4L78">
    <property type="method" value="X-ray"/>
    <property type="resolution" value="2.18 A"/>
    <property type="chains" value="A=1-1295"/>
</dbReference>
<dbReference type="PDB" id="4LGY">
    <property type="method" value="X-ray"/>
    <property type="resolution" value="1.48 A"/>
    <property type="chains" value="A=1-1295"/>
</dbReference>
<dbReference type="PDB" id="4MGH">
    <property type="method" value="X-ray"/>
    <property type="resolution" value="2.65 A"/>
    <property type="chains" value="A=1-1295"/>
</dbReference>
<dbReference type="PDB" id="4R7G">
    <property type="method" value="X-ray"/>
    <property type="resolution" value="2.90 A"/>
    <property type="chains" value="A=1-1295"/>
</dbReference>
<dbReference type="PDB" id="6JT7">
    <property type="method" value="X-ray"/>
    <property type="resolution" value="1.86 A"/>
    <property type="chains" value="A=1-1295"/>
</dbReference>
<dbReference type="PDB" id="6JT8">
    <property type="method" value="X-ray"/>
    <property type="resolution" value="1.90 A"/>
    <property type="chains" value="A=1-1295"/>
</dbReference>
<dbReference type="PDB" id="6JT9">
    <property type="method" value="X-ray"/>
    <property type="resolution" value="2.10 A"/>
    <property type="chains" value="A=1-1295"/>
</dbReference>
<dbReference type="PDB" id="6JTA">
    <property type="method" value="X-ray"/>
    <property type="resolution" value="1.75 A"/>
    <property type="chains" value="A=1-1295"/>
</dbReference>
<dbReference type="PDB" id="6LYK">
    <property type="method" value="X-ray"/>
    <property type="resolution" value="1.70 A"/>
    <property type="chains" value="A=1-1295"/>
</dbReference>
<dbReference type="PDB" id="6LYL">
    <property type="method" value="X-ray"/>
    <property type="resolution" value="2.10 A"/>
    <property type="chains" value="A=1-1295"/>
</dbReference>
<dbReference type="PDB" id="6LYM">
    <property type="method" value="X-ray"/>
    <property type="resolution" value="2.46 A"/>
    <property type="chains" value="A=1-1295"/>
</dbReference>
<dbReference type="PDB" id="6LYO">
    <property type="method" value="X-ray"/>
    <property type="resolution" value="1.87 A"/>
    <property type="chains" value="A=1-1295"/>
</dbReference>
<dbReference type="PDB" id="7DW7">
    <property type="method" value="X-ray"/>
    <property type="resolution" value="1.80 A"/>
    <property type="chains" value="A=1-1295"/>
</dbReference>
<dbReference type="PDBsum" id="1T3T"/>
<dbReference type="PDBsum" id="3UGJ"/>
<dbReference type="PDBsum" id="3UJN"/>
<dbReference type="PDBsum" id="3UMM"/>
<dbReference type="PDBsum" id="4L78"/>
<dbReference type="PDBsum" id="4LGY"/>
<dbReference type="PDBsum" id="4MGH"/>
<dbReference type="PDBsum" id="4R7G"/>
<dbReference type="PDBsum" id="6JT7"/>
<dbReference type="PDBsum" id="6JT8"/>
<dbReference type="PDBsum" id="6JT9"/>
<dbReference type="PDBsum" id="6JTA"/>
<dbReference type="PDBsum" id="6LYK"/>
<dbReference type="PDBsum" id="6LYL"/>
<dbReference type="PDBsum" id="6LYM"/>
<dbReference type="PDBsum" id="6LYO"/>
<dbReference type="PDBsum" id="7DW7"/>
<dbReference type="SMR" id="P74881"/>
<dbReference type="STRING" id="99287.STM2565"/>
<dbReference type="PaxDb" id="99287-STM2565"/>
<dbReference type="KEGG" id="stm:STM2565"/>
<dbReference type="PATRIC" id="fig|99287.12.peg.2706"/>
<dbReference type="HOGENOM" id="CLU_001031_0_2_6"/>
<dbReference type="OMA" id="LSANWMW"/>
<dbReference type="PhylomeDB" id="P74881"/>
<dbReference type="BioCyc" id="SENT99287:STM2565-MONOMER"/>
<dbReference type="BRENDA" id="6.3.5.3">
    <property type="organism ID" value="5542"/>
</dbReference>
<dbReference type="UniPathway" id="UPA00074">
    <property type="reaction ID" value="UER00128"/>
</dbReference>
<dbReference type="EvolutionaryTrace" id="P74881"/>
<dbReference type="Proteomes" id="UP000001014">
    <property type="component" value="Chromosome"/>
</dbReference>
<dbReference type="GO" id="GO:0005737">
    <property type="term" value="C:cytoplasm"/>
    <property type="evidence" value="ECO:0000318"/>
    <property type="project" value="GO_Central"/>
</dbReference>
<dbReference type="GO" id="GO:0005524">
    <property type="term" value="F:ATP binding"/>
    <property type="evidence" value="ECO:0007669"/>
    <property type="project" value="UniProtKB-UniRule"/>
</dbReference>
<dbReference type="GO" id="GO:0046872">
    <property type="term" value="F:metal ion binding"/>
    <property type="evidence" value="ECO:0007669"/>
    <property type="project" value="UniProtKB-KW"/>
</dbReference>
<dbReference type="GO" id="GO:0004642">
    <property type="term" value="F:phosphoribosylformylglycinamidine synthase activity"/>
    <property type="evidence" value="ECO:0000318"/>
    <property type="project" value="GO_Central"/>
</dbReference>
<dbReference type="GO" id="GO:0006189">
    <property type="term" value="P:'de novo' IMP biosynthetic process"/>
    <property type="evidence" value="ECO:0007669"/>
    <property type="project" value="UniProtKB-UniRule"/>
</dbReference>
<dbReference type="GO" id="GO:0006164">
    <property type="term" value="P:purine nucleotide biosynthetic process"/>
    <property type="evidence" value="ECO:0000318"/>
    <property type="project" value="GO_Central"/>
</dbReference>
<dbReference type="CDD" id="cd01740">
    <property type="entry name" value="GATase1_FGAR_AT"/>
    <property type="match status" value="1"/>
</dbReference>
<dbReference type="CDD" id="cd02193">
    <property type="entry name" value="PurL"/>
    <property type="match status" value="1"/>
</dbReference>
<dbReference type="CDD" id="cd02203">
    <property type="entry name" value="PurL_repeat1"/>
    <property type="match status" value="1"/>
</dbReference>
<dbReference type="FunFam" id="1.10.8.750:FF:000002">
    <property type="entry name" value="Phosphoribosylformylglycinamidine synthase"/>
    <property type="match status" value="1"/>
</dbReference>
<dbReference type="FunFam" id="3.30.1330.10:FF:000002">
    <property type="entry name" value="Phosphoribosylformylglycinamidine synthase"/>
    <property type="match status" value="1"/>
</dbReference>
<dbReference type="FunFam" id="3.30.1330.10:FF:000005">
    <property type="entry name" value="Phosphoribosylformylglycinamidine synthase"/>
    <property type="match status" value="1"/>
</dbReference>
<dbReference type="FunFam" id="3.40.50.880:FF:000008">
    <property type="entry name" value="Phosphoribosylformylglycinamidine synthase"/>
    <property type="match status" value="1"/>
</dbReference>
<dbReference type="FunFam" id="3.90.650.10:FF:000002">
    <property type="entry name" value="Phosphoribosylformylglycinamidine synthase"/>
    <property type="match status" value="1"/>
</dbReference>
<dbReference type="FunFam" id="3.90.650.10:FF:000005">
    <property type="entry name" value="Phosphoribosylformylglycinamidine synthase"/>
    <property type="match status" value="1"/>
</dbReference>
<dbReference type="Gene3D" id="3.40.50.880">
    <property type="match status" value="1"/>
</dbReference>
<dbReference type="Gene3D" id="1.10.8.750">
    <property type="entry name" value="Phosphoribosylformylglycinamidine synthase, linker domain"/>
    <property type="match status" value="1"/>
</dbReference>
<dbReference type="Gene3D" id="3.90.650.10">
    <property type="entry name" value="PurM-like C-terminal domain"/>
    <property type="match status" value="2"/>
</dbReference>
<dbReference type="Gene3D" id="3.30.1330.10">
    <property type="entry name" value="PurM-like, N-terminal domain"/>
    <property type="match status" value="2"/>
</dbReference>
<dbReference type="HAMAP" id="MF_00419">
    <property type="entry name" value="PurL_1"/>
    <property type="match status" value="1"/>
</dbReference>
<dbReference type="InterPro" id="IPR029062">
    <property type="entry name" value="Class_I_gatase-like"/>
</dbReference>
<dbReference type="InterPro" id="IPR040707">
    <property type="entry name" value="FGAR-AT_N"/>
</dbReference>
<dbReference type="InterPro" id="IPR055181">
    <property type="entry name" value="FGAR-AT_PurM_N-like"/>
</dbReference>
<dbReference type="InterPro" id="IPR010073">
    <property type="entry name" value="PurL_large"/>
</dbReference>
<dbReference type="InterPro" id="IPR041609">
    <property type="entry name" value="PurL_linker"/>
</dbReference>
<dbReference type="InterPro" id="IPR010918">
    <property type="entry name" value="PurM-like_C_dom"/>
</dbReference>
<dbReference type="InterPro" id="IPR036676">
    <property type="entry name" value="PurM-like_C_sf"/>
</dbReference>
<dbReference type="InterPro" id="IPR036921">
    <property type="entry name" value="PurM-like_N_sf"/>
</dbReference>
<dbReference type="InterPro" id="IPR036604">
    <property type="entry name" value="PurS-like_sf"/>
</dbReference>
<dbReference type="NCBIfam" id="TIGR01735">
    <property type="entry name" value="FGAM_synt"/>
    <property type="match status" value="1"/>
</dbReference>
<dbReference type="NCBIfam" id="NF003672">
    <property type="entry name" value="PRK05297.1"/>
    <property type="match status" value="1"/>
</dbReference>
<dbReference type="PANTHER" id="PTHR10099">
    <property type="entry name" value="PHOSPHORIBOSYLFORMYLGLYCINAMIDINE SYNTHASE"/>
    <property type="match status" value="1"/>
</dbReference>
<dbReference type="PANTHER" id="PTHR10099:SF1">
    <property type="entry name" value="PHOSPHORIBOSYLFORMYLGLYCINAMIDINE SYNTHASE"/>
    <property type="match status" value="1"/>
</dbReference>
<dbReference type="Pfam" id="PF02769">
    <property type="entry name" value="AIRS_C"/>
    <property type="match status" value="2"/>
</dbReference>
<dbReference type="Pfam" id="PF18072">
    <property type="entry name" value="FGAR-AT_linker"/>
    <property type="match status" value="1"/>
</dbReference>
<dbReference type="Pfam" id="PF18076">
    <property type="entry name" value="FGAR-AT_N"/>
    <property type="match status" value="1"/>
</dbReference>
<dbReference type="Pfam" id="PF22689">
    <property type="entry name" value="FGAR-AT_PurM_N-like"/>
    <property type="match status" value="1"/>
</dbReference>
<dbReference type="Pfam" id="PF13507">
    <property type="entry name" value="GATase_5"/>
    <property type="match status" value="1"/>
</dbReference>
<dbReference type="SMART" id="SM01211">
    <property type="entry name" value="GATase_5"/>
    <property type="match status" value="1"/>
</dbReference>
<dbReference type="SUPFAM" id="SSF52317">
    <property type="entry name" value="Class I glutamine amidotransferase-like"/>
    <property type="match status" value="1"/>
</dbReference>
<dbReference type="SUPFAM" id="SSF109736">
    <property type="entry name" value="FGAM synthase PurL, linker domain"/>
    <property type="match status" value="1"/>
</dbReference>
<dbReference type="SUPFAM" id="SSF56042">
    <property type="entry name" value="PurM C-terminal domain-like"/>
    <property type="match status" value="2"/>
</dbReference>
<dbReference type="SUPFAM" id="SSF55326">
    <property type="entry name" value="PurM N-terminal domain-like"/>
    <property type="match status" value="2"/>
</dbReference>
<dbReference type="SUPFAM" id="SSF82697">
    <property type="entry name" value="PurS-like"/>
    <property type="match status" value="1"/>
</dbReference>
<dbReference type="PROSITE" id="PS51273">
    <property type="entry name" value="GATASE_TYPE_1"/>
    <property type="match status" value="1"/>
</dbReference>
<organism>
    <name type="scientific">Salmonella typhimurium (strain LT2 / SGSC1412 / ATCC 700720)</name>
    <dbReference type="NCBI Taxonomy" id="99287"/>
    <lineage>
        <taxon>Bacteria</taxon>
        <taxon>Pseudomonadati</taxon>
        <taxon>Pseudomonadota</taxon>
        <taxon>Gammaproteobacteria</taxon>
        <taxon>Enterobacterales</taxon>
        <taxon>Enterobacteriaceae</taxon>
        <taxon>Salmonella</taxon>
    </lineage>
</organism>
<feature type="chain" id="PRO_0000100418" description="Phosphoribosylformylglycinamidine synthase">
    <location>
        <begin position="1"/>
        <end position="1295"/>
    </location>
</feature>
<feature type="domain" description="Glutamine amidotransferase type-1" evidence="1">
    <location>
        <begin position="1042"/>
        <end position="1295"/>
    </location>
</feature>
<feature type="region of interest" description="Disordered" evidence="2">
    <location>
        <begin position="305"/>
        <end position="327"/>
    </location>
</feature>
<feature type="active site" description="Nucleophile" evidence="1">
    <location>
        <position position="1135"/>
    </location>
</feature>
<feature type="active site" evidence="1">
    <location>
        <position position="1260"/>
    </location>
</feature>
<feature type="active site" evidence="1">
    <location>
        <position position="1262"/>
    </location>
</feature>
<feature type="binding site" evidence="1">
    <location>
        <begin position="307"/>
        <end position="318"/>
    </location>
    <ligand>
        <name>ATP</name>
        <dbReference type="ChEBI" id="CHEBI:30616"/>
    </ligand>
</feature>
<feature type="binding site">
    <location>
        <begin position="386"/>
        <end position="388"/>
    </location>
    <ligand>
        <name>ATP</name>
        <dbReference type="ChEBI" id="CHEBI:30616"/>
    </ligand>
</feature>
<feature type="binding site">
    <location>
        <position position="678"/>
    </location>
    <ligand>
        <name>ATP</name>
        <dbReference type="ChEBI" id="CHEBI:30616"/>
    </ligand>
</feature>
<feature type="binding site" evidence="1 3 4 5">
    <location>
        <position position="679"/>
    </location>
    <ligand>
        <name>Mg(2+)</name>
        <dbReference type="ChEBI" id="CHEBI:18420"/>
    </ligand>
</feature>
<feature type="binding site" evidence="1 3 4 5">
    <location>
        <position position="718"/>
    </location>
    <ligand>
        <name>Mg(2+)</name>
        <dbReference type="ChEBI" id="CHEBI:18420"/>
    </ligand>
</feature>
<feature type="binding site" evidence="1 3 4 5">
    <location>
        <position position="722"/>
    </location>
    <ligand>
        <name>Mg(2+)</name>
        <dbReference type="ChEBI" id="CHEBI:18420"/>
    </ligand>
</feature>
<feature type="binding site" evidence="1 3 4 5">
    <location>
        <position position="884"/>
    </location>
    <ligand>
        <name>Mg(2+)</name>
        <dbReference type="ChEBI" id="CHEBI:18420"/>
    </ligand>
</feature>
<feature type="binding site">
    <location>
        <position position="886"/>
    </location>
    <ligand>
        <name>ATP</name>
        <dbReference type="ChEBI" id="CHEBI:30616"/>
    </ligand>
</feature>
<feature type="mutagenesis site" description="This mutant shows a perturbation of the local environment, however has a secondary structure content and a FGAM synthase activity very similar to the wild-type protein." evidence="5">
    <original>F</original>
    <variation>W</variation>
    <location>
        <position position="209"/>
    </location>
</feature>
<feature type="mutagenesis site" description="This mutant shows a disturbance in the secondary structure of the protein and causes a 30% loss in FGAM synthase activity." evidence="5">
    <original>T</original>
    <variation>W</variation>
    <location>
        <position position="683"/>
    </location>
</feature>
<feature type="mutagenesis site" description="This mutant has a lower overall folding of the secondary structure and shows a 60% loss in FGAM synthase activity." evidence="5">
    <original>L</original>
    <variation>F</variation>
    <location>
        <position position="1181"/>
    </location>
</feature>
<feature type="mutagenesis site" description="This mutant has the same secondary structure content and FGAM synthetase activity as the wild-type protein and exhibits almost no destabilization." evidence="5">
    <original>L</original>
    <variation>W</variation>
    <location>
        <position position="1181"/>
    </location>
</feature>
<feature type="mutagenesis site" description="This mutant is extremely deleterious to the structural integrity of the protein." evidence="5">
    <original>L</original>
    <variation>Y</variation>
    <location>
        <position position="1181"/>
    </location>
</feature>
<feature type="mutagenesis site" description="This mutant is structurally identical to the wild-type protein." evidence="5">
    <original>R</original>
    <variation>A</variation>
    <location>
        <position position="1263"/>
    </location>
</feature>
<feature type="strand" evidence="9">
    <location>
        <begin position="1"/>
        <end position="9"/>
    </location>
</feature>
<feature type="helix" evidence="9">
    <location>
        <begin position="13"/>
        <end position="25"/>
    </location>
</feature>
<feature type="strand" evidence="9">
    <location>
        <begin position="32"/>
        <end position="45"/>
    </location>
</feature>
<feature type="helix" evidence="9">
    <location>
        <begin position="49"/>
        <end position="58"/>
    </location>
</feature>
<feature type="strand" evidence="9">
    <location>
        <begin position="72"/>
        <end position="79"/>
    </location>
</feature>
<feature type="helix" evidence="9">
    <location>
        <begin position="86"/>
        <end position="97"/>
    </location>
</feature>
<feature type="strand" evidence="9">
    <location>
        <begin position="103"/>
        <end position="115"/>
    </location>
</feature>
<feature type="helix" evidence="9">
    <location>
        <begin position="121"/>
        <end position="130"/>
    </location>
</feature>
<feature type="turn" evidence="9">
    <location>
        <begin position="134"/>
        <end position="136"/>
    </location>
</feature>
<feature type="strand" evidence="9">
    <location>
        <begin position="137"/>
        <end position="142"/>
    </location>
</feature>
<feature type="helix" evidence="9">
    <location>
        <begin position="143"/>
        <end position="150"/>
    </location>
</feature>
<feature type="helix" evidence="9">
    <location>
        <begin position="163"/>
        <end position="166"/>
    </location>
</feature>
<feature type="helix" evidence="9">
    <location>
        <begin position="169"/>
        <end position="178"/>
    </location>
</feature>
<feature type="helix" evidence="9">
    <location>
        <begin position="184"/>
        <end position="197"/>
    </location>
</feature>
<feature type="helix" evidence="9">
    <location>
        <begin position="203"/>
        <end position="212"/>
    </location>
</feature>
<feature type="helix" evidence="9">
    <location>
        <begin position="215"/>
        <end position="218"/>
    </location>
</feature>
<feature type="helix" evidence="9">
    <location>
        <begin position="220"/>
        <end position="223"/>
    </location>
</feature>
<feature type="strand" evidence="9">
    <location>
        <begin position="225"/>
        <end position="228"/>
    </location>
</feature>
<feature type="strand" evidence="6">
    <location>
        <begin position="231"/>
        <end position="235"/>
    </location>
</feature>
<feature type="helix" evidence="9">
    <location>
        <begin position="237"/>
        <end position="247"/>
    </location>
</feature>
<feature type="strand" evidence="9">
    <location>
        <begin position="252"/>
        <end position="254"/>
    </location>
</feature>
<feature type="strand" evidence="9">
    <location>
        <begin position="256"/>
        <end position="273"/>
    </location>
</feature>
<feature type="turn" evidence="9">
    <location>
        <begin position="275"/>
        <end position="277"/>
    </location>
</feature>
<feature type="strand" evidence="9">
    <location>
        <begin position="279"/>
        <end position="295"/>
    </location>
</feature>
<feature type="helix" evidence="9">
    <location>
        <begin position="297"/>
        <end position="302"/>
    </location>
</feature>
<feature type="helix" evidence="9">
    <location>
        <begin position="304"/>
        <end position="320"/>
    </location>
</feature>
<feature type="strand" evidence="9">
    <location>
        <begin position="327"/>
        <end position="338"/>
    </location>
</feature>
<feature type="strand" evidence="7">
    <location>
        <begin position="357"/>
        <end position="359"/>
    </location>
</feature>
<feature type="helix" evidence="9">
    <location>
        <begin position="362"/>
        <end position="380"/>
    </location>
</feature>
<feature type="strand" evidence="9">
    <location>
        <begin position="384"/>
        <end position="391"/>
    </location>
</feature>
<feature type="strand" evidence="9">
    <location>
        <begin position="393"/>
        <end position="398"/>
    </location>
</feature>
<feature type="strand" evidence="9">
    <location>
        <begin position="401"/>
        <end position="406"/>
    </location>
</feature>
<feature type="strand" evidence="9">
    <location>
        <begin position="411"/>
        <end position="420"/>
    </location>
</feature>
<feature type="helix" evidence="9">
    <location>
        <begin position="422"/>
        <end position="424"/>
    </location>
</feature>
<feature type="strand" evidence="9">
    <location>
        <begin position="435"/>
        <end position="440"/>
    </location>
</feature>
<feature type="helix" evidence="12">
    <location>
        <begin position="448"/>
        <end position="450"/>
    </location>
</feature>
<feature type="strand" evidence="11">
    <location>
        <begin position="458"/>
        <end position="460"/>
    </location>
</feature>
<feature type="helix" evidence="9">
    <location>
        <begin position="467"/>
        <end position="469"/>
    </location>
</feature>
<feature type="helix" evidence="9">
    <location>
        <begin position="475"/>
        <end position="489"/>
    </location>
</feature>
<feature type="helix" evidence="9">
    <location>
        <begin position="490"/>
        <end position="494"/>
    </location>
</feature>
<feature type="strand" evidence="9">
    <location>
        <begin position="498"/>
        <end position="502"/>
    </location>
</feature>
<feature type="turn" evidence="9">
    <location>
        <begin position="505"/>
        <end position="507"/>
    </location>
</feature>
<feature type="helix" evidence="9">
    <location>
        <begin position="508"/>
        <end position="518"/>
    </location>
</feature>
<feature type="strand" evidence="9">
    <location>
        <begin position="522"/>
        <end position="526"/>
    </location>
</feature>
<feature type="helix" evidence="9">
    <location>
        <begin position="527"/>
        <end position="529"/>
    </location>
</feature>
<feature type="helix" evidence="9">
    <location>
        <begin position="539"/>
        <end position="544"/>
    </location>
</feature>
<feature type="strand" evidence="9">
    <location>
        <begin position="548"/>
        <end position="555"/>
    </location>
</feature>
<feature type="helix" evidence="9">
    <location>
        <begin position="557"/>
        <end position="559"/>
    </location>
</feature>
<feature type="helix" evidence="9">
    <location>
        <begin position="560"/>
        <end position="570"/>
    </location>
</feature>
<feature type="strand" evidence="9">
    <location>
        <begin position="574"/>
        <end position="590"/>
    </location>
</feature>
<feature type="turn" evidence="9">
    <location>
        <begin position="591"/>
        <end position="594"/>
    </location>
</feature>
<feature type="strand" evidence="9">
    <location>
        <begin position="595"/>
        <end position="601"/>
    </location>
</feature>
<feature type="helix" evidence="9">
    <location>
        <begin position="602"/>
        <end position="605"/>
    </location>
</feature>
<feature type="strand" evidence="9">
    <location>
        <begin position="613"/>
        <end position="616"/>
    </location>
</feature>
<feature type="helix" evidence="9">
    <location>
        <begin position="633"/>
        <end position="641"/>
    </location>
</feature>
<feature type="turn" evidence="9">
    <location>
        <begin position="644"/>
        <end position="646"/>
    </location>
</feature>
<feature type="helix" evidence="9">
    <location>
        <begin position="650"/>
        <end position="653"/>
    </location>
</feature>
<feature type="helix" evidence="8">
    <location>
        <begin position="660"/>
        <end position="662"/>
    </location>
</feature>
<feature type="strand" evidence="9">
    <location>
        <begin position="664"/>
        <end position="666"/>
    </location>
</feature>
<feature type="strand" evidence="9">
    <location>
        <begin position="668"/>
        <end position="670"/>
    </location>
</feature>
<feature type="turn" evidence="9">
    <location>
        <begin position="671"/>
        <end position="674"/>
    </location>
</feature>
<feature type="strand" evidence="9">
    <location>
        <begin position="679"/>
        <end position="686"/>
    </location>
</feature>
<feature type="strand" evidence="9">
    <location>
        <begin position="692"/>
        <end position="699"/>
    </location>
</feature>
<feature type="helix" evidence="9">
    <location>
        <begin position="701"/>
        <end position="705"/>
    </location>
</feature>
<feature type="helix" evidence="9">
    <location>
        <begin position="708"/>
        <end position="723"/>
    </location>
</feature>
<feature type="helix" evidence="9">
    <location>
        <begin position="731"/>
        <end position="733"/>
    </location>
</feature>
<feature type="strand" evidence="9">
    <location>
        <begin position="735"/>
        <end position="741"/>
    </location>
</feature>
<feature type="helix" evidence="9">
    <location>
        <begin position="749"/>
        <end position="761"/>
    </location>
</feature>
<feature type="helix" evidence="9">
    <location>
        <begin position="764"/>
        <end position="768"/>
    </location>
</feature>
<feature type="strand" evidence="9">
    <location>
        <begin position="771"/>
        <end position="778"/>
    </location>
</feature>
<feature type="strand" evidence="9">
    <location>
        <begin position="782"/>
        <end position="795"/>
    </location>
</feature>
<feature type="strand" evidence="9">
    <location>
        <begin position="799"/>
        <end position="809"/>
    </location>
</feature>
<feature type="helix" evidence="9">
    <location>
        <begin position="811"/>
        <end position="813"/>
    </location>
</feature>
<feature type="strand" evidence="9">
    <location>
        <begin position="822"/>
        <end position="830"/>
    </location>
</feature>
<feature type="turn" evidence="9">
    <location>
        <begin position="831"/>
        <end position="834"/>
    </location>
</feature>
<feature type="strand" evidence="8">
    <location>
        <begin position="839"/>
        <end position="841"/>
    </location>
</feature>
<feature type="helix" evidence="9">
    <location>
        <begin position="842"/>
        <end position="846"/>
    </location>
</feature>
<feature type="strand" evidence="8">
    <location>
        <begin position="852"/>
        <end position="854"/>
    </location>
</feature>
<feature type="helix" evidence="9">
    <location>
        <begin position="860"/>
        <end position="875"/>
    </location>
</feature>
<feature type="strand" evidence="9">
    <location>
        <begin position="880"/>
        <end position="884"/>
    </location>
</feature>
<feature type="helix" evidence="9">
    <location>
        <begin position="889"/>
        <end position="901"/>
    </location>
</feature>
<feature type="strand" evidence="9">
    <location>
        <begin position="903"/>
        <end position="908"/>
    </location>
</feature>
<feature type="helix" evidence="9">
    <location>
        <begin position="910"/>
        <end position="912"/>
    </location>
</feature>
<feature type="helix" evidence="9">
    <location>
        <begin position="916"/>
        <end position="921"/>
    </location>
</feature>
<feature type="strand" evidence="9">
    <location>
        <begin position="925"/>
        <end position="932"/>
    </location>
</feature>
<feature type="helix" evidence="9">
    <location>
        <begin position="933"/>
        <end position="935"/>
    </location>
</feature>
<feature type="helix" evidence="9">
    <location>
        <begin position="936"/>
        <end position="945"/>
    </location>
</feature>
<feature type="helix" evidence="9">
    <location>
        <begin position="949"/>
        <end position="951"/>
    </location>
</feature>
<feature type="strand" evidence="9">
    <location>
        <begin position="952"/>
        <end position="968"/>
    </location>
</feature>
<feature type="strand" evidence="9">
    <location>
        <begin position="971"/>
        <end position="977"/>
    </location>
</feature>
<feature type="helix" evidence="9">
    <location>
        <begin position="978"/>
        <end position="996"/>
    </location>
</feature>
<feature type="helix" evidence="9">
    <location>
        <begin position="999"/>
        <end position="1009"/>
    </location>
</feature>
<feature type="helix" evidence="9">
    <location>
        <begin position="1031"/>
        <end position="1034"/>
    </location>
</feature>
<feature type="turn" evidence="9">
    <location>
        <begin position="1035"/>
        <end position="1037"/>
    </location>
</feature>
<feature type="strand" evidence="9">
    <location>
        <begin position="1041"/>
        <end position="1046"/>
    </location>
</feature>
<feature type="strand" evidence="7">
    <location>
        <begin position="1050"/>
        <end position="1052"/>
    </location>
</feature>
<feature type="helix" evidence="9">
    <location>
        <begin position="1053"/>
        <end position="1062"/>
    </location>
</feature>
<feature type="strand" evidence="9">
    <location>
        <begin position="1066"/>
        <end position="1071"/>
    </location>
</feature>
<feature type="helix" evidence="9">
    <location>
        <begin position="1072"/>
        <end position="1076"/>
    </location>
</feature>
<feature type="helix" evidence="9">
    <location>
        <begin position="1082"/>
        <end position="1084"/>
    </location>
</feature>
<feature type="strand" evidence="9">
    <location>
        <begin position="1086"/>
        <end position="1090"/>
    </location>
</feature>
<feature type="helix" evidence="9">
    <location>
        <begin position="1095"/>
        <end position="1098"/>
    </location>
</feature>
<feature type="helix" evidence="9">
    <location>
        <begin position="1104"/>
        <end position="1111"/>
    </location>
</feature>
<feature type="helix" evidence="9">
    <location>
        <begin position="1114"/>
        <end position="1125"/>
    </location>
</feature>
<feature type="strand" evidence="9">
    <location>
        <begin position="1126"/>
        <end position="1128"/>
    </location>
</feature>
<feature type="strand" evidence="9">
    <location>
        <begin position="1130"/>
        <end position="1134"/>
    </location>
</feature>
<feature type="helix" evidence="9">
    <location>
        <begin position="1136"/>
        <end position="1143"/>
    </location>
</feature>
<feature type="helix" evidence="9">
    <location>
        <begin position="1145"/>
        <end position="1147"/>
    </location>
</feature>
<feature type="strand" evidence="9">
    <location>
        <begin position="1156"/>
        <end position="1158"/>
    </location>
</feature>
<feature type="strand" evidence="9">
    <location>
        <begin position="1166"/>
        <end position="1174"/>
    </location>
</feature>
<feature type="helix" evidence="9">
    <location>
        <begin position="1180"/>
        <end position="1182"/>
    </location>
</feature>
<feature type="turn" evidence="7">
    <location>
        <begin position="1183"/>
        <end position="1187"/>
    </location>
</feature>
<feature type="strand" evidence="9">
    <location>
        <begin position="1189"/>
        <end position="1198"/>
    </location>
</feature>
<feature type="strand" evidence="9">
    <location>
        <begin position="1200"/>
        <end position="1202"/>
    </location>
</feature>
<feature type="helix" evidence="9">
    <location>
        <begin position="1206"/>
        <end position="1215"/>
    </location>
</feature>
<feature type="strand" evidence="9">
    <location>
        <begin position="1218"/>
        <end position="1223"/>
    </location>
</feature>
<feature type="strand" evidence="7">
    <location>
        <begin position="1227"/>
        <end position="1229"/>
    </location>
</feature>
<feature type="turn" evidence="9">
    <location>
        <begin position="1233"/>
        <end position="1235"/>
    </location>
</feature>
<feature type="strand" evidence="9">
    <location>
        <begin position="1236"/>
        <end position="1238"/>
    </location>
</feature>
<feature type="helix" evidence="9">
    <location>
        <begin position="1241"/>
        <end position="1243"/>
    </location>
</feature>
<feature type="strand" evidence="9">
    <location>
        <begin position="1244"/>
        <end position="1248"/>
    </location>
</feature>
<feature type="strand" evidence="9">
    <location>
        <begin position="1252"/>
        <end position="1260"/>
    </location>
</feature>
<feature type="helix" evidence="9">
    <location>
        <begin position="1261"/>
        <end position="1263"/>
    </location>
</feature>
<feature type="strand" evidence="9">
    <location>
        <begin position="1264"/>
        <end position="1266"/>
    </location>
</feature>
<feature type="helix" evidence="9">
    <location>
        <begin position="1267"/>
        <end position="1269"/>
    </location>
</feature>
<feature type="strand" evidence="10">
    <location>
        <begin position="1270"/>
        <end position="1272"/>
    </location>
</feature>
<feature type="helix" evidence="9">
    <location>
        <begin position="1284"/>
        <end position="1294"/>
    </location>
</feature>
<proteinExistence type="evidence at protein level"/>
<name>PUR4_SALTY</name>
<reference key="1">
    <citation type="submission" date="1996-08" db="EMBL/GenBank/DDBJ databases">
        <authorList>
            <person name="Zilles J.L."/>
            <person name="Downs D.M."/>
        </authorList>
    </citation>
    <scope>NUCLEOTIDE SEQUENCE [GENOMIC DNA]</scope>
    <source>
        <strain>LT2 / SGSC1412 / ATCC 700720</strain>
    </source>
</reference>
<reference key="2">
    <citation type="journal article" date="2001" name="Nature">
        <title>Complete genome sequence of Salmonella enterica serovar Typhimurium LT2.</title>
        <authorList>
            <person name="McClelland M."/>
            <person name="Sanderson K.E."/>
            <person name="Spieth J."/>
            <person name="Clifton S.W."/>
            <person name="Latreille P."/>
            <person name="Courtney L."/>
            <person name="Porwollik S."/>
            <person name="Ali J."/>
            <person name="Dante M."/>
            <person name="Du F."/>
            <person name="Hou S."/>
            <person name="Layman D."/>
            <person name="Leonard S."/>
            <person name="Nguyen C."/>
            <person name="Scott K."/>
            <person name="Holmes A."/>
            <person name="Grewal N."/>
            <person name="Mulvaney E."/>
            <person name="Ryan E."/>
            <person name="Sun H."/>
            <person name="Florea L."/>
            <person name="Miller W."/>
            <person name="Stoneking T."/>
            <person name="Nhan M."/>
            <person name="Waterston R."/>
            <person name="Wilson R.K."/>
        </authorList>
    </citation>
    <scope>NUCLEOTIDE SEQUENCE [LARGE SCALE GENOMIC DNA]</scope>
    <source>
        <strain>LT2 / SGSC1412 / ATCC 700720</strain>
    </source>
</reference>
<reference key="3">
    <citation type="journal article" date="2004" name="Biochemistry">
        <title>Domain organization of Salmonella typhimurium formylglycinamide ribonucleotide amidotransferase revealed by X-ray crystallography.</title>
        <authorList>
            <person name="Anand R."/>
            <person name="Hoskins A.A."/>
            <person name="Stubbe J."/>
            <person name="Ealick S.E."/>
        </authorList>
    </citation>
    <scope>X-RAY CRYSTALLOGRAPHY (1.90 ANGSTROMS) IN COMPLEX WITH ATP ANALOG; ADP AND MAGNESIUM</scope>
</reference>
<reference key="4">
    <citation type="journal article" date="2012" name="Acta Crystallogr. D">
        <title>Formylglycinamide ribonucleotide amidotransferase from Salmonella typhimurium: role of ATP complexation and the glutaminase domain in catalytic coupling.</title>
        <authorList>
            <person name="Tanwar A.S."/>
            <person name="Morar M."/>
            <person name="Panjikar S."/>
            <person name="Anand R."/>
        </authorList>
    </citation>
    <scope>X-RAY CRYSTALLOGRAPHY (1.78 ANGSTROMS) IN COMPLEX WITH ADP AND MAGNESIUM</scope>
</reference>
<reference key="5">
    <citation type="journal article" date="2013" name="PLoS ONE">
        <title>Importance of hydrophobic cavities in allosteric regulation of formylglycinamide synthetase: insight from xenon trapping and statistical coupling analysis.</title>
        <authorList>
            <person name="Tanwar A.S."/>
            <person name="Goyal V.D."/>
            <person name="Choudhary D."/>
            <person name="Panjikar S."/>
            <person name="Anand R."/>
        </authorList>
    </citation>
    <scope>X-RAY CRYSTALLOGRAPHY (1.48 ANGSTROMS) OF WILD-TYPE; MUTANTS TRP-209 AND ALA-1263 IN COMPLEX WITH ADP AND MAGNESIUM</scope>
    <scope>FUNCTION</scope>
    <scope>MUTAGENESIS OF PHE-209; THR-683; LEU-1181 AND ARG-1263</scope>
</reference>
<keyword id="KW-0002">3D-structure</keyword>
<keyword id="KW-0067">ATP-binding</keyword>
<keyword id="KW-0963">Cytoplasm</keyword>
<keyword id="KW-0315">Glutamine amidotransferase</keyword>
<keyword id="KW-0436">Ligase</keyword>
<keyword id="KW-0460">Magnesium</keyword>
<keyword id="KW-0479">Metal-binding</keyword>
<keyword id="KW-0547">Nucleotide-binding</keyword>
<keyword id="KW-0658">Purine biosynthesis</keyword>
<keyword id="KW-1185">Reference proteome</keyword>
<evidence type="ECO:0000255" key="1">
    <source>
        <dbReference type="HAMAP-Rule" id="MF_00419"/>
    </source>
</evidence>
<evidence type="ECO:0000256" key="2">
    <source>
        <dbReference type="SAM" id="MobiDB-lite"/>
    </source>
</evidence>
<evidence type="ECO:0000269" key="3">
    <source>
    </source>
</evidence>
<evidence type="ECO:0000269" key="4">
    <source>
    </source>
</evidence>
<evidence type="ECO:0000269" key="5">
    <source>
    </source>
</evidence>
<evidence type="ECO:0007829" key="6">
    <source>
        <dbReference type="PDB" id="3UGJ"/>
    </source>
</evidence>
<evidence type="ECO:0007829" key="7">
    <source>
        <dbReference type="PDB" id="3UJN"/>
    </source>
</evidence>
<evidence type="ECO:0007829" key="8">
    <source>
        <dbReference type="PDB" id="3UMM"/>
    </source>
</evidence>
<evidence type="ECO:0007829" key="9">
    <source>
        <dbReference type="PDB" id="4LGY"/>
    </source>
</evidence>
<evidence type="ECO:0007829" key="10">
    <source>
        <dbReference type="PDB" id="6JT7"/>
    </source>
</evidence>
<evidence type="ECO:0007829" key="11">
    <source>
        <dbReference type="PDB" id="6JTA"/>
    </source>
</evidence>
<evidence type="ECO:0007829" key="12">
    <source>
        <dbReference type="PDB" id="6LYK"/>
    </source>
</evidence>
<gene>
    <name evidence="1" type="primary">purL</name>
    <name type="ordered locus">STM2565</name>
</gene>
<sequence>MMEILRGSPALSAFRINKLLARFQAANLQVHNIYAEYVHFADLNAPLNDSEQAQLTRLLQYGPALSSHTPAGKLLLVTPRPGTISPWSSKATDIAHNCGLQQVDRLERGVAYYIEASTLTAEQWRQVAAELHDRMMETVFSSLTDAEKLFIHHQPAPVSSVDLLGEGRQALIDANLRLGLALAEDEIDYLQEAFTKLGRNPNDIELYMFAQANSEHCRHKIFNADWIIDGKPQPKSLFKMIKNTFETTPDYVLSAYKDNAAVMEGSAVGRYFADHNTGRYDFHQEPAHILMKVETHNHPTAISPWPGAATGSGGEIRDEGATGRGAKPKAGLVGFSVSNLRIPGFEQPWEEDFGKPERIVTALDIMTEGPLGGAAFNNEFGRPALTGYFRTYEEKVNSHNGEELRGYHKPIMLAGGIGNIRADHVQKGEIVVGAKLIVLGGPAMNIGLGGGAASSMASGQSDADLDFASVQRDNPEMERRCQEVIDRCWQLGDANPILFIHDVGAGGLSNAMPELVSDGGRGGKFELRDILSDEPGMSPLEIWCNESQERYVLAVAADQLPLFDELCKRERAPYAVIGDATEEQHLSLHDNHFDNQPIDLPLDVLLGKTPKMTRDVQTLKAKGDALNRADITIADAVKRVLHLPTVAEKTFLVTIGDRTVTGMVARDQMVGPWQVPVADCAVTTASLDSYYGEAMSIGERAPVALLDFAASARLAVGEALTNIAATQIGDIKRIKLSANWMAAAGHPGEDAGLYDAVKAVGEELCPQLGLTIPVGKDSMSMKTRWQEGNEQREMTSPLSLVISAFARVEDVRHTLTPQLSTEDNALLLIDLGKGHNALGATALAQVYRQLGDKPADVRDVAQLKGFYDAMQALVAARKLLAWHDRSDGGLLVTLAEMAFAGHCGVQVDIAALGDDHLAALFNEELGGVIQVRAEDRDAVEALLAQYGLADCVHYLGQALAGDRFVITANDQTVFSESRTTLRVWWAETTWQMQRLRDNPQCADQEHEAKANDTDPGLNVKLSFDINEDIAAPYIATGARPKVAVLREQGVNSHVEMAAAFHRAGFDAIDVHMSDLLGGRIGLGNFHALVACGGFSYGDVLGAGEGWAKSILFNHRVRDEFETFFHRPQTLALGVCNGCQMMSNLRELIPGSELWPRFVRNHSDRFEARFSLVEVTQSPSLLLQGMVGSQMPIAVSHGEGRVEVRDDAHLAALESKGLVALRYVDNFGKVTETYPANPNGSPNGITAVTTENGRVTIMMPHPERVFRTVANSWHPENWGEDSPWMRIFRNARKQLG</sequence>